<gene>
    <name evidence="1" type="primary">rdgC</name>
    <name type="ordered locus">AHA_3048</name>
</gene>
<proteinExistence type="inferred from homology"/>
<accession>A0KMP9</accession>
<sequence length="303" mass="33799">MWFKNLQIYRFTRPFELTVEQLETQLEACAFTPCGSQDISRFGWVKPLGKFGSTLTHSAAGHILICARKEEKMLPGTVVKEMLAEKVEAIEFEQGRALKKKEKEALKEEILHTLLPRAFSRTSQTFAWINPADNLMVVDAGSAKKADDLLALLRKSIGTLPVVPVALKNPPEITMTEWLNEGNLPASFTLEDEAELRSAMEHGGIIRCKQQDLMTDEIKNHLANDKLVTKLALNWGETLSFVLGDDLSIKRLKFSEELREQNDDVTSEDPAARLDADFALVTAELAQFIPALFAALGGEEQSI</sequence>
<comment type="function">
    <text evidence="1">May be involved in recombination.</text>
</comment>
<comment type="subcellular location">
    <subcellularLocation>
        <location evidence="1">Cytoplasm</location>
        <location evidence="1">Nucleoid</location>
    </subcellularLocation>
</comment>
<comment type="similarity">
    <text evidence="1">Belongs to the RdgC family.</text>
</comment>
<reference key="1">
    <citation type="journal article" date="2006" name="J. Bacteriol.">
        <title>Genome sequence of Aeromonas hydrophila ATCC 7966T: jack of all trades.</title>
        <authorList>
            <person name="Seshadri R."/>
            <person name="Joseph S.W."/>
            <person name="Chopra A.K."/>
            <person name="Sha J."/>
            <person name="Shaw J."/>
            <person name="Graf J."/>
            <person name="Haft D.H."/>
            <person name="Wu M."/>
            <person name="Ren Q."/>
            <person name="Rosovitz M.J."/>
            <person name="Madupu R."/>
            <person name="Tallon L."/>
            <person name="Kim M."/>
            <person name="Jin S."/>
            <person name="Vuong H."/>
            <person name="Stine O.C."/>
            <person name="Ali A."/>
            <person name="Horneman A.J."/>
            <person name="Heidelberg J.F."/>
        </authorList>
    </citation>
    <scope>NUCLEOTIDE SEQUENCE [LARGE SCALE GENOMIC DNA]</scope>
    <source>
        <strain>ATCC 7966 / DSM 30187 / BCRC 13018 / CCUG 14551 / JCM 1027 / KCTC 2358 / NCIMB 9240 / NCTC 8049</strain>
    </source>
</reference>
<feature type="chain" id="PRO_1000021201" description="Recombination-associated protein RdgC">
    <location>
        <begin position="1"/>
        <end position="303"/>
    </location>
</feature>
<name>RDGC_AERHH</name>
<organism>
    <name type="scientific">Aeromonas hydrophila subsp. hydrophila (strain ATCC 7966 / DSM 30187 / BCRC 13018 / CCUG 14551 / JCM 1027 / KCTC 2358 / NCIMB 9240 / NCTC 8049)</name>
    <dbReference type="NCBI Taxonomy" id="380703"/>
    <lineage>
        <taxon>Bacteria</taxon>
        <taxon>Pseudomonadati</taxon>
        <taxon>Pseudomonadota</taxon>
        <taxon>Gammaproteobacteria</taxon>
        <taxon>Aeromonadales</taxon>
        <taxon>Aeromonadaceae</taxon>
        <taxon>Aeromonas</taxon>
    </lineage>
</organism>
<evidence type="ECO:0000255" key="1">
    <source>
        <dbReference type="HAMAP-Rule" id="MF_00194"/>
    </source>
</evidence>
<protein>
    <recommendedName>
        <fullName evidence="1">Recombination-associated protein RdgC</fullName>
    </recommendedName>
</protein>
<dbReference type="EMBL" id="CP000462">
    <property type="protein sequence ID" value="ABK36985.1"/>
    <property type="molecule type" value="Genomic_DNA"/>
</dbReference>
<dbReference type="RefSeq" id="WP_011706841.1">
    <property type="nucleotide sequence ID" value="NC_008570.1"/>
</dbReference>
<dbReference type="RefSeq" id="YP_857550.1">
    <property type="nucleotide sequence ID" value="NC_008570.1"/>
</dbReference>
<dbReference type="SMR" id="A0KMP9"/>
<dbReference type="STRING" id="380703.AHA_3048"/>
<dbReference type="EnsemblBacteria" id="ABK36985">
    <property type="protein sequence ID" value="ABK36985"/>
    <property type="gene ID" value="AHA_3048"/>
</dbReference>
<dbReference type="GeneID" id="4490390"/>
<dbReference type="KEGG" id="aha:AHA_3048"/>
<dbReference type="PATRIC" id="fig|380703.7.peg.3048"/>
<dbReference type="eggNOG" id="COG2974">
    <property type="taxonomic scope" value="Bacteria"/>
</dbReference>
<dbReference type="HOGENOM" id="CLU_052038_1_1_6"/>
<dbReference type="OrthoDB" id="5290530at2"/>
<dbReference type="Proteomes" id="UP000000756">
    <property type="component" value="Chromosome"/>
</dbReference>
<dbReference type="GO" id="GO:0043590">
    <property type="term" value="C:bacterial nucleoid"/>
    <property type="evidence" value="ECO:0007669"/>
    <property type="project" value="TreeGrafter"/>
</dbReference>
<dbReference type="GO" id="GO:0005737">
    <property type="term" value="C:cytoplasm"/>
    <property type="evidence" value="ECO:0007669"/>
    <property type="project" value="UniProtKB-UniRule"/>
</dbReference>
<dbReference type="GO" id="GO:0003690">
    <property type="term" value="F:double-stranded DNA binding"/>
    <property type="evidence" value="ECO:0007669"/>
    <property type="project" value="TreeGrafter"/>
</dbReference>
<dbReference type="GO" id="GO:0006310">
    <property type="term" value="P:DNA recombination"/>
    <property type="evidence" value="ECO:0007669"/>
    <property type="project" value="UniProtKB-UniRule"/>
</dbReference>
<dbReference type="GO" id="GO:0000018">
    <property type="term" value="P:regulation of DNA recombination"/>
    <property type="evidence" value="ECO:0007669"/>
    <property type="project" value="TreeGrafter"/>
</dbReference>
<dbReference type="HAMAP" id="MF_00194">
    <property type="entry name" value="RdgC"/>
    <property type="match status" value="1"/>
</dbReference>
<dbReference type="InterPro" id="IPR007476">
    <property type="entry name" value="RdgC"/>
</dbReference>
<dbReference type="NCBIfam" id="NF001462">
    <property type="entry name" value="PRK00321.1-3"/>
    <property type="match status" value="1"/>
</dbReference>
<dbReference type="NCBIfam" id="NF001464">
    <property type="entry name" value="PRK00321.1-5"/>
    <property type="match status" value="1"/>
</dbReference>
<dbReference type="PANTHER" id="PTHR38103">
    <property type="entry name" value="RECOMBINATION-ASSOCIATED PROTEIN RDGC"/>
    <property type="match status" value="1"/>
</dbReference>
<dbReference type="PANTHER" id="PTHR38103:SF1">
    <property type="entry name" value="RECOMBINATION-ASSOCIATED PROTEIN RDGC"/>
    <property type="match status" value="1"/>
</dbReference>
<dbReference type="Pfam" id="PF04381">
    <property type="entry name" value="RdgC"/>
    <property type="match status" value="1"/>
</dbReference>
<keyword id="KW-0963">Cytoplasm</keyword>
<keyword id="KW-0233">DNA recombination</keyword>
<keyword id="KW-1185">Reference proteome</keyword>